<accession>Q9UU95</accession>
<organism>
    <name type="scientific">Schizosaccharomyces pombe (strain 972 / ATCC 24843)</name>
    <name type="common">Fission yeast</name>
    <dbReference type="NCBI Taxonomy" id="284812"/>
    <lineage>
        <taxon>Eukaryota</taxon>
        <taxon>Fungi</taxon>
        <taxon>Dikarya</taxon>
        <taxon>Ascomycota</taxon>
        <taxon>Taphrinomycotina</taxon>
        <taxon>Schizosaccharomycetes</taxon>
        <taxon>Schizosaccharomycetales</taxon>
        <taxon>Schizosaccharomycetaceae</taxon>
        <taxon>Schizosaccharomyces</taxon>
    </lineage>
</organism>
<sequence length="143" mass="17299">MEYANLHYVKESSNLERSSTYKSSKIQDEAKQLLYDYVYIKEKLLTTSSNSLTHYQWYLIYKHTCRCFQQVVRIVYWFLGNQVIRENFSIKKRKPHNHIPQLLEQCTCIAESFEGIYTKKQILYFKCYGTFKTWKKIANFPHL</sequence>
<feature type="chain" id="PRO_0000278624" description="Meiotically up-regulated gene 128 protein">
    <location>
        <begin position="1"/>
        <end position="143"/>
    </location>
</feature>
<protein>
    <recommendedName>
        <fullName>Meiotically up-regulated gene 128 protein</fullName>
    </recommendedName>
</protein>
<evidence type="ECO:0000269" key="1">
    <source>
    </source>
</evidence>
<dbReference type="EMBL" id="CU329672">
    <property type="protein sequence ID" value="CAB52877.1"/>
    <property type="molecule type" value="Genomic_DNA"/>
</dbReference>
<dbReference type="PIR" id="T41630">
    <property type="entry name" value="T41630"/>
</dbReference>
<dbReference type="RefSeq" id="NP_588474.1">
    <property type="nucleotide sequence ID" value="NM_001023465.1"/>
</dbReference>
<dbReference type="iPTMnet" id="Q9UU95"/>
<dbReference type="PaxDb" id="4896-SPCC830.04c.1"/>
<dbReference type="EnsemblFungi" id="SPCC830.04c.1">
    <property type="protein sequence ID" value="SPCC830.04c.1:pep"/>
    <property type="gene ID" value="SPCC830.04c"/>
</dbReference>
<dbReference type="GeneID" id="2539089"/>
<dbReference type="KEGG" id="spo:2539089"/>
<dbReference type="PomBase" id="SPCC830.04c">
    <property type="gene designation" value="mug128"/>
</dbReference>
<dbReference type="VEuPathDB" id="FungiDB:SPCC830.04c"/>
<dbReference type="HOGENOM" id="CLU_1807332_0_0_1"/>
<dbReference type="InParanoid" id="Q9UU95"/>
<dbReference type="PRO" id="PR:Q9UU95"/>
<dbReference type="Proteomes" id="UP000002485">
    <property type="component" value="Chromosome III"/>
</dbReference>
<dbReference type="GO" id="GO:0051321">
    <property type="term" value="P:meiotic cell cycle"/>
    <property type="evidence" value="ECO:0007669"/>
    <property type="project" value="UniProtKB-KW"/>
</dbReference>
<comment type="function">
    <text evidence="1">Has a role in meiosis.</text>
</comment>
<reference key="1">
    <citation type="journal article" date="2002" name="Nature">
        <title>The genome sequence of Schizosaccharomyces pombe.</title>
        <authorList>
            <person name="Wood V."/>
            <person name="Gwilliam R."/>
            <person name="Rajandream M.A."/>
            <person name="Lyne M.H."/>
            <person name="Lyne R."/>
            <person name="Stewart A."/>
            <person name="Sgouros J.G."/>
            <person name="Peat N."/>
            <person name="Hayles J."/>
            <person name="Baker S.G."/>
            <person name="Basham D."/>
            <person name="Bowman S."/>
            <person name="Brooks K."/>
            <person name="Brown D."/>
            <person name="Brown S."/>
            <person name="Chillingworth T."/>
            <person name="Churcher C.M."/>
            <person name="Collins M."/>
            <person name="Connor R."/>
            <person name="Cronin A."/>
            <person name="Davis P."/>
            <person name="Feltwell T."/>
            <person name="Fraser A."/>
            <person name="Gentles S."/>
            <person name="Goble A."/>
            <person name="Hamlin N."/>
            <person name="Harris D.E."/>
            <person name="Hidalgo J."/>
            <person name="Hodgson G."/>
            <person name="Holroyd S."/>
            <person name="Hornsby T."/>
            <person name="Howarth S."/>
            <person name="Huckle E.J."/>
            <person name="Hunt S."/>
            <person name="Jagels K."/>
            <person name="James K.D."/>
            <person name="Jones L."/>
            <person name="Jones M."/>
            <person name="Leather S."/>
            <person name="McDonald S."/>
            <person name="McLean J."/>
            <person name="Mooney P."/>
            <person name="Moule S."/>
            <person name="Mungall K.L."/>
            <person name="Murphy L.D."/>
            <person name="Niblett D."/>
            <person name="Odell C."/>
            <person name="Oliver K."/>
            <person name="O'Neil S."/>
            <person name="Pearson D."/>
            <person name="Quail M.A."/>
            <person name="Rabbinowitsch E."/>
            <person name="Rutherford K.M."/>
            <person name="Rutter S."/>
            <person name="Saunders D."/>
            <person name="Seeger K."/>
            <person name="Sharp S."/>
            <person name="Skelton J."/>
            <person name="Simmonds M.N."/>
            <person name="Squares R."/>
            <person name="Squares S."/>
            <person name="Stevens K."/>
            <person name="Taylor K."/>
            <person name="Taylor R.G."/>
            <person name="Tivey A."/>
            <person name="Walsh S.V."/>
            <person name="Warren T."/>
            <person name="Whitehead S."/>
            <person name="Woodward J.R."/>
            <person name="Volckaert G."/>
            <person name="Aert R."/>
            <person name="Robben J."/>
            <person name="Grymonprez B."/>
            <person name="Weltjens I."/>
            <person name="Vanstreels E."/>
            <person name="Rieger M."/>
            <person name="Schaefer M."/>
            <person name="Mueller-Auer S."/>
            <person name="Gabel C."/>
            <person name="Fuchs M."/>
            <person name="Duesterhoeft A."/>
            <person name="Fritzc C."/>
            <person name="Holzer E."/>
            <person name="Moestl D."/>
            <person name="Hilbert H."/>
            <person name="Borzym K."/>
            <person name="Langer I."/>
            <person name="Beck A."/>
            <person name="Lehrach H."/>
            <person name="Reinhardt R."/>
            <person name="Pohl T.M."/>
            <person name="Eger P."/>
            <person name="Zimmermann W."/>
            <person name="Wedler H."/>
            <person name="Wambutt R."/>
            <person name="Purnelle B."/>
            <person name="Goffeau A."/>
            <person name="Cadieu E."/>
            <person name="Dreano S."/>
            <person name="Gloux S."/>
            <person name="Lelaure V."/>
            <person name="Mottier S."/>
            <person name="Galibert F."/>
            <person name="Aves S.J."/>
            <person name="Xiang Z."/>
            <person name="Hunt C."/>
            <person name="Moore K."/>
            <person name="Hurst S.M."/>
            <person name="Lucas M."/>
            <person name="Rochet M."/>
            <person name="Gaillardin C."/>
            <person name="Tallada V.A."/>
            <person name="Garzon A."/>
            <person name="Thode G."/>
            <person name="Daga R.R."/>
            <person name="Cruzado L."/>
            <person name="Jimenez J."/>
            <person name="Sanchez M."/>
            <person name="del Rey F."/>
            <person name="Benito J."/>
            <person name="Dominguez A."/>
            <person name="Revuelta J.L."/>
            <person name="Moreno S."/>
            <person name="Armstrong J."/>
            <person name="Forsburg S.L."/>
            <person name="Cerutti L."/>
            <person name="Lowe T."/>
            <person name="McCombie W.R."/>
            <person name="Paulsen I."/>
            <person name="Potashkin J."/>
            <person name="Shpakovski G.V."/>
            <person name="Ussery D."/>
            <person name="Barrell B.G."/>
            <person name="Nurse P."/>
        </authorList>
    </citation>
    <scope>NUCLEOTIDE SEQUENCE [LARGE SCALE GENOMIC DNA]</scope>
    <source>
        <strain>972 / ATCC 24843</strain>
    </source>
</reference>
<reference key="2">
    <citation type="journal article" date="2005" name="Curr. Biol.">
        <title>A large-scale screen in S. pombe identifies seven novel genes required for critical meiotic events.</title>
        <authorList>
            <person name="Martin-Castellanos C."/>
            <person name="Blanco M."/>
            <person name="Rozalen A.E."/>
            <person name="Perez-Hidalgo L."/>
            <person name="Garcia A.I."/>
            <person name="Conde F."/>
            <person name="Mata J."/>
            <person name="Ellermeier C."/>
            <person name="Davis L."/>
            <person name="San-Segundo P."/>
            <person name="Smith G.R."/>
            <person name="Moreno S."/>
        </authorList>
    </citation>
    <scope>FUNCTION IN MEIOSIS</scope>
</reference>
<name>MU128_SCHPO</name>
<gene>
    <name type="primary">mug128</name>
    <name type="ORF">SPCC830.04c</name>
</gene>
<proteinExistence type="evidence at protein level"/>
<keyword id="KW-0469">Meiosis</keyword>
<keyword id="KW-1185">Reference proteome</keyword>